<sequence length="480" mass="54885">MPKEVITQRSVDYNQWYLDIVREADLAEVAEVVRGCIVVKAHGWAIWELMQRALDDRIKATGHANVQFPLLIPKSFIMKEAEHVEGFAPEVAEVTRAGGEELAEPYIIRPTSETIIGYFYSKWIRSYRDLPLLYNQWANVMRWEMRTRPFLRTAEFWWQEGHTAHATEAEAEEETLRILHDVYADFVEKEMAVPVIRGLKTEKEKFPGALRSYCIEAMMQDGRALQAGTSHNLGQNFARAFDITFTDQNNTIQYAWTTSWGVSTRLIGALIMTHSDDEGLVLPPRLAPIQVVVVPIYKNDEERSLVMAAVEQMTAAWKGRLRFKVDDRDNYSPGYKFNEWELKGVPVRIEVGPKDVAKETVALARRDIPGKAGKSFVPQAGLTERIEALLNEMQTALFQRALAFREAHTADVTSYDELKEQIERGFARAYWAGDTADEKRIQEETRATIRCIPLEQPGSVGRCVYTGRETDRQVIFARAY</sequence>
<protein>
    <recommendedName>
        <fullName evidence="1">Proline--tRNA ligase</fullName>
        <ecNumber evidence="1">6.1.1.15</ecNumber>
    </recommendedName>
    <alternativeName>
        <fullName evidence="1">Prolyl-tRNA synthetase</fullName>
        <shortName evidence="1">ProRS</shortName>
    </alternativeName>
</protein>
<dbReference type="EC" id="6.1.1.15" evidence="1"/>
<dbReference type="EMBL" id="CP001364">
    <property type="protein sequence ID" value="ACM52849.1"/>
    <property type="molecule type" value="Genomic_DNA"/>
</dbReference>
<dbReference type="SMR" id="B9LC55"/>
<dbReference type="KEGG" id="chl:Chy400_1431"/>
<dbReference type="HOGENOM" id="CLU_001882_4_2_0"/>
<dbReference type="OrthoDB" id="9809052at2"/>
<dbReference type="GO" id="GO:0017101">
    <property type="term" value="C:aminoacyl-tRNA synthetase multienzyme complex"/>
    <property type="evidence" value="ECO:0007669"/>
    <property type="project" value="TreeGrafter"/>
</dbReference>
<dbReference type="GO" id="GO:0005737">
    <property type="term" value="C:cytoplasm"/>
    <property type="evidence" value="ECO:0007669"/>
    <property type="project" value="UniProtKB-SubCell"/>
</dbReference>
<dbReference type="GO" id="GO:0005524">
    <property type="term" value="F:ATP binding"/>
    <property type="evidence" value="ECO:0007669"/>
    <property type="project" value="UniProtKB-UniRule"/>
</dbReference>
<dbReference type="GO" id="GO:0004827">
    <property type="term" value="F:proline-tRNA ligase activity"/>
    <property type="evidence" value="ECO:0007669"/>
    <property type="project" value="UniProtKB-UniRule"/>
</dbReference>
<dbReference type="GO" id="GO:0006433">
    <property type="term" value="P:prolyl-tRNA aminoacylation"/>
    <property type="evidence" value="ECO:0007669"/>
    <property type="project" value="UniProtKB-UniRule"/>
</dbReference>
<dbReference type="CDD" id="cd00862">
    <property type="entry name" value="ProRS_anticodon_zinc"/>
    <property type="match status" value="1"/>
</dbReference>
<dbReference type="CDD" id="cd00778">
    <property type="entry name" value="ProRS_core_arch_euk"/>
    <property type="match status" value="1"/>
</dbReference>
<dbReference type="FunFam" id="3.30.930.10:FF:000023">
    <property type="entry name" value="Proline--tRNA ligase"/>
    <property type="match status" value="1"/>
</dbReference>
<dbReference type="FunFam" id="3.40.50.800:FF:000073">
    <property type="entry name" value="Proline--tRNA ligase"/>
    <property type="match status" value="1"/>
</dbReference>
<dbReference type="Gene3D" id="3.40.50.800">
    <property type="entry name" value="Anticodon-binding domain"/>
    <property type="match status" value="1"/>
</dbReference>
<dbReference type="Gene3D" id="3.30.930.10">
    <property type="entry name" value="Bira Bifunctional Protein, Domain 2"/>
    <property type="match status" value="1"/>
</dbReference>
<dbReference type="Gene3D" id="3.30.110.30">
    <property type="entry name" value="C-terminal domain of ProRS"/>
    <property type="match status" value="1"/>
</dbReference>
<dbReference type="HAMAP" id="MF_01571">
    <property type="entry name" value="Pro_tRNA_synth_type3"/>
    <property type="match status" value="1"/>
</dbReference>
<dbReference type="InterPro" id="IPR002314">
    <property type="entry name" value="aa-tRNA-synt_IIb"/>
</dbReference>
<dbReference type="InterPro" id="IPR006195">
    <property type="entry name" value="aa-tRNA-synth_II"/>
</dbReference>
<dbReference type="InterPro" id="IPR045864">
    <property type="entry name" value="aa-tRNA-synth_II/BPL/LPL"/>
</dbReference>
<dbReference type="InterPro" id="IPR004154">
    <property type="entry name" value="Anticodon-bd"/>
</dbReference>
<dbReference type="InterPro" id="IPR036621">
    <property type="entry name" value="Anticodon-bd_dom_sf"/>
</dbReference>
<dbReference type="InterPro" id="IPR002316">
    <property type="entry name" value="Pro-tRNA-ligase_IIa"/>
</dbReference>
<dbReference type="InterPro" id="IPR004499">
    <property type="entry name" value="Pro-tRNA-ligase_IIa_arc-type"/>
</dbReference>
<dbReference type="InterPro" id="IPR016061">
    <property type="entry name" value="Pro-tRNA_ligase_II_C"/>
</dbReference>
<dbReference type="InterPro" id="IPR017449">
    <property type="entry name" value="Pro-tRNA_synth_II"/>
</dbReference>
<dbReference type="InterPro" id="IPR033721">
    <property type="entry name" value="ProRS_core_arch_euk"/>
</dbReference>
<dbReference type="NCBIfam" id="TIGR00408">
    <property type="entry name" value="proS_fam_I"/>
    <property type="match status" value="1"/>
</dbReference>
<dbReference type="PANTHER" id="PTHR43382:SF2">
    <property type="entry name" value="BIFUNCTIONAL GLUTAMATE_PROLINE--TRNA LIGASE"/>
    <property type="match status" value="1"/>
</dbReference>
<dbReference type="PANTHER" id="PTHR43382">
    <property type="entry name" value="PROLYL-TRNA SYNTHETASE"/>
    <property type="match status" value="1"/>
</dbReference>
<dbReference type="Pfam" id="PF03129">
    <property type="entry name" value="HGTP_anticodon"/>
    <property type="match status" value="1"/>
</dbReference>
<dbReference type="Pfam" id="PF09180">
    <property type="entry name" value="ProRS-C_1"/>
    <property type="match status" value="1"/>
</dbReference>
<dbReference type="Pfam" id="PF00587">
    <property type="entry name" value="tRNA-synt_2b"/>
    <property type="match status" value="1"/>
</dbReference>
<dbReference type="PRINTS" id="PR01046">
    <property type="entry name" value="TRNASYNTHPRO"/>
</dbReference>
<dbReference type="SMART" id="SM00946">
    <property type="entry name" value="ProRS-C_1"/>
    <property type="match status" value="1"/>
</dbReference>
<dbReference type="SUPFAM" id="SSF64586">
    <property type="entry name" value="C-terminal domain of ProRS"/>
    <property type="match status" value="1"/>
</dbReference>
<dbReference type="SUPFAM" id="SSF52954">
    <property type="entry name" value="Class II aaRS ABD-related"/>
    <property type="match status" value="1"/>
</dbReference>
<dbReference type="SUPFAM" id="SSF55681">
    <property type="entry name" value="Class II aaRS and biotin synthetases"/>
    <property type="match status" value="1"/>
</dbReference>
<dbReference type="PROSITE" id="PS50862">
    <property type="entry name" value="AA_TRNA_LIGASE_II"/>
    <property type="match status" value="1"/>
</dbReference>
<accession>B9LC55</accession>
<organism>
    <name type="scientific">Chloroflexus aurantiacus (strain ATCC 29364 / DSM 637 / Y-400-fl)</name>
    <dbReference type="NCBI Taxonomy" id="480224"/>
    <lineage>
        <taxon>Bacteria</taxon>
        <taxon>Bacillati</taxon>
        <taxon>Chloroflexota</taxon>
        <taxon>Chloroflexia</taxon>
        <taxon>Chloroflexales</taxon>
        <taxon>Chloroflexineae</taxon>
        <taxon>Chloroflexaceae</taxon>
        <taxon>Chloroflexus</taxon>
    </lineage>
</organism>
<evidence type="ECO:0000255" key="1">
    <source>
        <dbReference type="HAMAP-Rule" id="MF_01571"/>
    </source>
</evidence>
<keyword id="KW-0030">Aminoacyl-tRNA synthetase</keyword>
<keyword id="KW-0067">ATP-binding</keyword>
<keyword id="KW-0963">Cytoplasm</keyword>
<keyword id="KW-0436">Ligase</keyword>
<keyword id="KW-0547">Nucleotide-binding</keyword>
<keyword id="KW-0648">Protein biosynthesis</keyword>
<feature type="chain" id="PRO_1000215553" description="Proline--tRNA ligase">
    <location>
        <begin position="1"/>
        <end position="480"/>
    </location>
</feature>
<gene>
    <name evidence="1" type="primary">proS</name>
    <name type="ordered locus">Chy400_1431</name>
</gene>
<name>SYP_CHLSY</name>
<proteinExistence type="inferred from homology"/>
<comment type="function">
    <text evidence="1">Catalyzes the attachment of proline to tRNA(Pro) in a two-step reaction: proline is first activated by ATP to form Pro-AMP and then transferred to the acceptor end of tRNA(Pro).</text>
</comment>
<comment type="catalytic activity">
    <reaction evidence="1">
        <text>tRNA(Pro) + L-proline + ATP = L-prolyl-tRNA(Pro) + AMP + diphosphate</text>
        <dbReference type="Rhea" id="RHEA:14305"/>
        <dbReference type="Rhea" id="RHEA-COMP:9700"/>
        <dbReference type="Rhea" id="RHEA-COMP:9702"/>
        <dbReference type="ChEBI" id="CHEBI:30616"/>
        <dbReference type="ChEBI" id="CHEBI:33019"/>
        <dbReference type="ChEBI" id="CHEBI:60039"/>
        <dbReference type="ChEBI" id="CHEBI:78442"/>
        <dbReference type="ChEBI" id="CHEBI:78532"/>
        <dbReference type="ChEBI" id="CHEBI:456215"/>
        <dbReference type="EC" id="6.1.1.15"/>
    </reaction>
</comment>
<comment type="subunit">
    <text evidence="1">Homodimer.</text>
</comment>
<comment type="subcellular location">
    <subcellularLocation>
        <location evidence="1">Cytoplasm</location>
    </subcellularLocation>
</comment>
<comment type="domain">
    <text evidence="1">Consists of three domains: the N-terminal catalytic domain, the anticodon-binding domain and the C-terminal extension.</text>
</comment>
<comment type="similarity">
    <text evidence="1">Belongs to the class-II aminoacyl-tRNA synthetase family. ProS type 3 subfamily.</text>
</comment>
<reference key="1">
    <citation type="submission" date="2009-01" db="EMBL/GenBank/DDBJ databases">
        <title>Complete sequence of Chloroflexus sp. Y-400-fl.</title>
        <authorList>
            <consortium name="US DOE Joint Genome Institute"/>
            <person name="Lucas S."/>
            <person name="Copeland A."/>
            <person name="Lapidus A."/>
            <person name="Glavina del Rio T."/>
            <person name="Dalin E."/>
            <person name="Tice H."/>
            <person name="Bruce D."/>
            <person name="Goodwin L."/>
            <person name="Pitluck S."/>
            <person name="Sims D."/>
            <person name="Kiss H."/>
            <person name="Brettin T."/>
            <person name="Detter J.C."/>
            <person name="Han C."/>
            <person name="Larimer F."/>
            <person name="Land M."/>
            <person name="Hauser L."/>
            <person name="Kyrpides N."/>
            <person name="Ovchinnikova G."/>
            <person name="Bryant D.A."/>
            <person name="Richardson P."/>
        </authorList>
    </citation>
    <scope>NUCLEOTIDE SEQUENCE [LARGE SCALE GENOMIC DNA]</scope>
    <source>
        <strain>ATCC 29364 / DSM 637 / Y-400-fl</strain>
    </source>
</reference>